<dbReference type="EC" id="6.5.1.2" evidence="1"/>
<dbReference type="EMBL" id="AE017282">
    <property type="protein sequence ID" value="AAU91453.1"/>
    <property type="molecule type" value="Genomic_DNA"/>
</dbReference>
<dbReference type="RefSeq" id="WP_010961663.1">
    <property type="nucleotide sequence ID" value="NC_002977.6"/>
</dbReference>
<dbReference type="SMR" id="Q604U8"/>
<dbReference type="STRING" id="243233.MCA2438"/>
<dbReference type="GeneID" id="88224639"/>
<dbReference type="KEGG" id="mca:MCA2438"/>
<dbReference type="eggNOG" id="COG0272">
    <property type="taxonomic scope" value="Bacteria"/>
</dbReference>
<dbReference type="HOGENOM" id="CLU_007764_2_1_6"/>
<dbReference type="Proteomes" id="UP000006821">
    <property type="component" value="Chromosome"/>
</dbReference>
<dbReference type="GO" id="GO:0005829">
    <property type="term" value="C:cytosol"/>
    <property type="evidence" value="ECO:0007669"/>
    <property type="project" value="TreeGrafter"/>
</dbReference>
<dbReference type="GO" id="GO:0003677">
    <property type="term" value="F:DNA binding"/>
    <property type="evidence" value="ECO:0007669"/>
    <property type="project" value="InterPro"/>
</dbReference>
<dbReference type="GO" id="GO:0003911">
    <property type="term" value="F:DNA ligase (NAD+) activity"/>
    <property type="evidence" value="ECO:0007669"/>
    <property type="project" value="UniProtKB-UniRule"/>
</dbReference>
<dbReference type="GO" id="GO:0046872">
    <property type="term" value="F:metal ion binding"/>
    <property type="evidence" value="ECO:0007669"/>
    <property type="project" value="UniProtKB-KW"/>
</dbReference>
<dbReference type="GO" id="GO:0006281">
    <property type="term" value="P:DNA repair"/>
    <property type="evidence" value="ECO:0007669"/>
    <property type="project" value="UniProtKB-KW"/>
</dbReference>
<dbReference type="GO" id="GO:0006260">
    <property type="term" value="P:DNA replication"/>
    <property type="evidence" value="ECO:0007669"/>
    <property type="project" value="UniProtKB-KW"/>
</dbReference>
<dbReference type="CDD" id="cd17748">
    <property type="entry name" value="BRCT_DNA_ligase_like"/>
    <property type="match status" value="1"/>
</dbReference>
<dbReference type="CDD" id="cd00114">
    <property type="entry name" value="LIGANc"/>
    <property type="match status" value="1"/>
</dbReference>
<dbReference type="FunFam" id="1.10.150.20:FF:000006">
    <property type="entry name" value="DNA ligase"/>
    <property type="match status" value="1"/>
</dbReference>
<dbReference type="FunFam" id="1.10.150.20:FF:000007">
    <property type="entry name" value="DNA ligase"/>
    <property type="match status" value="1"/>
</dbReference>
<dbReference type="FunFam" id="1.10.287.610:FF:000002">
    <property type="entry name" value="DNA ligase"/>
    <property type="match status" value="1"/>
</dbReference>
<dbReference type="FunFam" id="2.40.50.140:FF:000012">
    <property type="entry name" value="DNA ligase"/>
    <property type="match status" value="1"/>
</dbReference>
<dbReference type="FunFam" id="3.30.470.30:FF:000001">
    <property type="entry name" value="DNA ligase"/>
    <property type="match status" value="1"/>
</dbReference>
<dbReference type="Gene3D" id="6.20.10.30">
    <property type="match status" value="1"/>
</dbReference>
<dbReference type="Gene3D" id="1.10.150.20">
    <property type="entry name" value="5' to 3' exonuclease, C-terminal subdomain"/>
    <property type="match status" value="2"/>
</dbReference>
<dbReference type="Gene3D" id="3.40.50.10190">
    <property type="entry name" value="BRCT domain"/>
    <property type="match status" value="1"/>
</dbReference>
<dbReference type="Gene3D" id="3.30.470.30">
    <property type="entry name" value="DNA ligase/mRNA capping enzyme"/>
    <property type="match status" value="1"/>
</dbReference>
<dbReference type="Gene3D" id="1.10.287.610">
    <property type="entry name" value="Helix hairpin bin"/>
    <property type="match status" value="1"/>
</dbReference>
<dbReference type="Gene3D" id="2.40.50.140">
    <property type="entry name" value="Nucleic acid-binding proteins"/>
    <property type="match status" value="1"/>
</dbReference>
<dbReference type="HAMAP" id="MF_01588">
    <property type="entry name" value="DNA_ligase_A"/>
    <property type="match status" value="1"/>
</dbReference>
<dbReference type="InterPro" id="IPR001357">
    <property type="entry name" value="BRCT_dom"/>
</dbReference>
<dbReference type="InterPro" id="IPR036420">
    <property type="entry name" value="BRCT_dom_sf"/>
</dbReference>
<dbReference type="InterPro" id="IPR041663">
    <property type="entry name" value="DisA/LigA_HHH"/>
</dbReference>
<dbReference type="InterPro" id="IPR001679">
    <property type="entry name" value="DNA_ligase"/>
</dbReference>
<dbReference type="InterPro" id="IPR018239">
    <property type="entry name" value="DNA_ligase_AS"/>
</dbReference>
<dbReference type="InterPro" id="IPR033136">
    <property type="entry name" value="DNA_ligase_CS"/>
</dbReference>
<dbReference type="InterPro" id="IPR013839">
    <property type="entry name" value="DNAligase_adenylation"/>
</dbReference>
<dbReference type="InterPro" id="IPR013840">
    <property type="entry name" value="DNAligase_N"/>
</dbReference>
<dbReference type="InterPro" id="IPR003583">
    <property type="entry name" value="Hlx-hairpin-Hlx_DNA-bd_motif"/>
</dbReference>
<dbReference type="InterPro" id="IPR012340">
    <property type="entry name" value="NA-bd_OB-fold"/>
</dbReference>
<dbReference type="InterPro" id="IPR004150">
    <property type="entry name" value="NAD_DNA_ligase_OB"/>
</dbReference>
<dbReference type="InterPro" id="IPR010994">
    <property type="entry name" value="RuvA_2-like"/>
</dbReference>
<dbReference type="InterPro" id="IPR004149">
    <property type="entry name" value="Znf_DNAligase_C4"/>
</dbReference>
<dbReference type="NCBIfam" id="TIGR00575">
    <property type="entry name" value="dnlj"/>
    <property type="match status" value="1"/>
</dbReference>
<dbReference type="NCBIfam" id="NF005932">
    <property type="entry name" value="PRK07956.1"/>
    <property type="match status" value="1"/>
</dbReference>
<dbReference type="PANTHER" id="PTHR23389">
    <property type="entry name" value="CHROMOSOME TRANSMISSION FIDELITY FACTOR 18"/>
    <property type="match status" value="1"/>
</dbReference>
<dbReference type="PANTHER" id="PTHR23389:SF9">
    <property type="entry name" value="DNA LIGASE"/>
    <property type="match status" value="1"/>
</dbReference>
<dbReference type="Pfam" id="PF00533">
    <property type="entry name" value="BRCT"/>
    <property type="match status" value="1"/>
</dbReference>
<dbReference type="Pfam" id="PF01653">
    <property type="entry name" value="DNA_ligase_aden"/>
    <property type="match status" value="1"/>
</dbReference>
<dbReference type="Pfam" id="PF03120">
    <property type="entry name" value="DNA_ligase_OB"/>
    <property type="match status" value="1"/>
</dbReference>
<dbReference type="Pfam" id="PF03119">
    <property type="entry name" value="DNA_ligase_ZBD"/>
    <property type="match status" value="1"/>
</dbReference>
<dbReference type="Pfam" id="PF12826">
    <property type="entry name" value="HHH_2"/>
    <property type="match status" value="1"/>
</dbReference>
<dbReference type="Pfam" id="PF14520">
    <property type="entry name" value="HHH_5"/>
    <property type="match status" value="1"/>
</dbReference>
<dbReference type="Pfam" id="PF22745">
    <property type="entry name" value="Nlig-Ia"/>
    <property type="match status" value="1"/>
</dbReference>
<dbReference type="PIRSF" id="PIRSF001604">
    <property type="entry name" value="LigA"/>
    <property type="match status" value="1"/>
</dbReference>
<dbReference type="SMART" id="SM00292">
    <property type="entry name" value="BRCT"/>
    <property type="match status" value="1"/>
</dbReference>
<dbReference type="SMART" id="SM00278">
    <property type="entry name" value="HhH1"/>
    <property type="match status" value="4"/>
</dbReference>
<dbReference type="SMART" id="SM00532">
    <property type="entry name" value="LIGANc"/>
    <property type="match status" value="1"/>
</dbReference>
<dbReference type="SUPFAM" id="SSF52113">
    <property type="entry name" value="BRCT domain"/>
    <property type="match status" value="1"/>
</dbReference>
<dbReference type="SUPFAM" id="SSF56091">
    <property type="entry name" value="DNA ligase/mRNA capping enzyme, catalytic domain"/>
    <property type="match status" value="1"/>
</dbReference>
<dbReference type="SUPFAM" id="SSF50249">
    <property type="entry name" value="Nucleic acid-binding proteins"/>
    <property type="match status" value="1"/>
</dbReference>
<dbReference type="SUPFAM" id="SSF47781">
    <property type="entry name" value="RuvA domain 2-like"/>
    <property type="match status" value="1"/>
</dbReference>
<dbReference type="PROSITE" id="PS50172">
    <property type="entry name" value="BRCT"/>
    <property type="match status" value="1"/>
</dbReference>
<dbReference type="PROSITE" id="PS01055">
    <property type="entry name" value="DNA_LIGASE_N1"/>
    <property type="match status" value="1"/>
</dbReference>
<dbReference type="PROSITE" id="PS01056">
    <property type="entry name" value="DNA_LIGASE_N2"/>
    <property type="match status" value="1"/>
</dbReference>
<protein>
    <recommendedName>
        <fullName evidence="1">DNA ligase</fullName>
        <ecNumber evidence="1">6.5.1.2</ecNumber>
    </recommendedName>
    <alternativeName>
        <fullName evidence="1">Polydeoxyribonucleotide synthase [NAD(+)]</fullName>
    </alternativeName>
</protein>
<name>DNLJ_METCA</name>
<sequence length="673" mass="74249">MSVPAEVVEKARKLREEIEFHNVRYYRLDDPLITDAEYDRLMAELLAIEARYPELVTPDSPTQRVGAPPVEAFTEVRHEVPMLSLENAFSEEDLTAFDRRVRKELSRDTLEYVAEPKLDGLAVNLLYQDGVLVRAATRGDGEVGEDVTHNVRAVRAIPLRLKGEDFPDRFEARGEVFMPKRGFLALNERARRSGEKTFVNPRNAAAGSLRQLDARVTASRPLSFYAYGIGAFPDARLPATQHELLESLQRWGLPVSPEYRVVRGAAGCLEYYRSLGERRHDLPYDIDGVVYKVDDLKAQAGLGFVSRAPRWAIAHKFPAEEARTRVVGIDVQVGRTGVLTPVARLEPVFVGGVTVTNATLHNADEIRRKDVRPGDTVIVRRAGDVIPEIVRVVPELRKPGAEPFRMPEVCPECGSAVEAEPGEVLARCSGGLYCPAQHKESIKHFASRRAMDIEGLGDKLVDQLVGRKLIATVADLYRLDLDRLAGLDRMGEKSAANLLAALERSKRTTLARFLYALGIRDVGEVTAKVLSEHFGSLEALMEATEEELLAVADVGPVVSRHIRLFFAQPHNREVISQLLACGVSWEKPAPAPRKLPLQGLVFVLTGTLASMSRDEARARLEALGAKCTGSVSRNTSFVVAGSEPGSKLDKASELGVPVLDEKGFLDLLERGRP</sequence>
<gene>
    <name evidence="1" type="primary">ligA</name>
    <name type="ordered locus">MCA2438</name>
</gene>
<comment type="function">
    <text evidence="1">DNA ligase that catalyzes the formation of phosphodiester linkages between 5'-phosphoryl and 3'-hydroxyl groups in double-stranded DNA using NAD as a coenzyme and as the energy source for the reaction. It is essential for DNA replication and repair of damaged DNA.</text>
</comment>
<comment type="catalytic activity">
    <reaction evidence="1">
        <text>NAD(+) + (deoxyribonucleotide)n-3'-hydroxyl + 5'-phospho-(deoxyribonucleotide)m = (deoxyribonucleotide)n+m + AMP + beta-nicotinamide D-nucleotide.</text>
        <dbReference type="EC" id="6.5.1.2"/>
    </reaction>
</comment>
<comment type="cofactor">
    <cofactor evidence="1">
        <name>Mg(2+)</name>
        <dbReference type="ChEBI" id="CHEBI:18420"/>
    </cofactor>
    <cofactor evidence="1">
        <name>Mn(2+)</name>
        <dbReference type="ChEBI" id="CHEBI:29035"/>
    </cofactor>
</comment>
<comment type="similarity">
    <text evidence="1">Belongs to the NAD-dependent DNA ligase family. LigA subfamily.</text>
</comment>
<evidence type="ECO:0000255" key="1">
    <source>
        <dbReference type="HAMAP-Rule" id="MF_01588"/>
    </source>
</evidence>
<feature type="chain" id="PRO_0000313308" description="DNA ligase">
    <location>
        <begin position="1"/>
        <end position="673"/>
    </location>
</feature>
<feature type="domain" description="BRCT" evidence="1">
    <location>
        <begin position="592"/>
        <end position="673"/>
    </location>
</feature>
<feature type="active site" description="N6-AMP-lysine intermediate" evidence="1">
    <location>
        <position position="117"/>
    </location>
</feature>
<feature type="binding site" evidence="1">
    <location>
        <begin position="35"/>
        <end position="39"/>
    </location>
    <ligand>
        <name>NAD(+)</name>
        <dbReference type="ChEBI" id="CHEBI:57540"/>
    </ligand>
</feature>
<feature type="binding site" evidence="1">
    <location>
        <begin position="84"/>
        <end position="85"/>
    </location>
    <ligand>
        <name>NAD(+)</name>
        <dbReference type="ChEBI" id="CHEBI:57540"/>
    </ligand>
</feature>
<feature type="binding site" evidence="1">
    <location>
        <position position="115"/>
    </location>
    <ligand>
        <name>NAD(+)</name>
        <dbReference type="ChEBI" id="CHEBI:57540"/>
    </ligand>
</feature>
<feature type="binding site" evidence="1">
    <location>
        <position position="138"/>
    </location>
    <ligand>
        <name>NAD(+)</name>
        <dbReference type="ChEBI" id="CHEBI:57540"/>
    </ligand>
</feature>
<feature type="binding site" evidence="1">
    <location>
        <position position="175"/>
    </location>
    <ligand>
        <name>NAD(+)</name>
        <dbReference type="ChEBI" id="CHEBI:57540"/>
    </ligand>
</feature>
<feature type="binding site" evidence="1">
    <location>
        <position position="292"/>
    </location>
    <ligand>
        <name>NAD(+)</name>
        <dbReference type="ChEBI" id="CHEBI:57540"/>
    </ligand>
</feature>
<feature type="binding site" evidence="1">
    <location>
        <position position="316"/>
    </location>
    <ligand>
        <name>NAD(+)</name>
        <dbReference type="ChEBI" id="CHEBI:57540"/>
    </ligand>
</feature>
<feature type="binding site" evidence="1">
    <location>
        <position position="410"/>
    </location>
    <ligand>
        <name>Zn(2+)</name>
        <dbReference type="ChEBI" id="CHEBI:29105"/>
    </ligand>
</feature>
<feature type="binding site" evidence="1">
    <location>
        <position position="413"/>
    </location>
    <ligand>
        <name>Zn(2+)</name>
        <dbReference type="ChEBI" id="CHEBI:29105"/>
    </ligand>
</feature>
<feature type="binding site" evidence="1">
    <location>
        <position position="428"/>
    </location>
    <ligand>
        <name>Zn(2+)</name>
        <dbReference type="ChEBI" id="CHEBI:29105"/>
    </ligand>
</feature>
<feature type="binding site" evidence="1">
    <location>
        <position position="434"/>
    </location>
    <ligand>
        <name>Zn(2+)</name>
        <dbReference type="ChEBI" id="CHEBI:29105"/>
    </ligand>
</feature>
<accession>Q604U8</accession>
<keyword id="KW-0227">DNA damage</keyword>
<keyword id="KW-0234">DNA repair</keyword>
<keyword id="KW-0235">DNA replication</keyword>
<keyword id="KW-0436">Ligase</keyword>
<keyword id="KW-0460">Magnesium</keyword>
<keyword id="KW-0464">Manganese</keyword>
<keyword id="KW-0479">Metal-binding</keyword>
<keyword id="KW-0520">NAD</keyword>
<keyword id="KW-1185">Reference proteome</keyword>
<keyword id="KW-0862">Zinc</keyword>
<proteinExistence type="inferred from homology"/>
<reference key="1">
    <citation type="journal article" date="2004" name="PLoS Biol.">
        <title>Genomic insights into methanotrophy: the complete genome sequence of Methylococcus capsulatus (Bath).</title>
        <authorList>
            <person name="Ward N.L."/>
            <person name="Larsen O."/>
            <person name="Sakwa J."/>
            <person name="Bruseth L."/>
            <person name="Khouri H.M."/>
            <person name="Durkin A.S."/>
            <person name="Dimitrov G."/>
            <person name="Jiang L."/>
            <person name="Scanlan D."/>
            <person name="Kang K.H."/>
            <person name="Lewis M.R."/>
            <person name="Nelson K.E."/>
            <person name="Methe B.A."/>
            <person name="Wu M."/>
            <person name="Heidelberg J.F."/>
            <person name="Paulsen I.T."/>
            <person name="Fouts D.E."/>
            <person name="Ravel J."/>
            <person name="Tettelin H."/>
            <person name="Ren Q."/>
            <person name="Read T.D."/>
            <person name="DeBoy R.T."/>
            <person name="Seshadri R."/>
            <person name="Salzberg S.L."/>
            <person name="Jensen H.B."/>
            <person name="Birkeland N.K."/>
            <person name="Nelson W.C."/>
            <person name="Dodson R.J."/>
            <person name="Grindhaug S.H."/>
            <person name="Holt I.E."/>
            <person name="Eidhammer I."/>
            <person name="Jonasen I."/>
            <person name="Vanaken S."/>
            <person name="Utterback T.R."/>
            <person name="Feldblyum T.V."/>
            <person name="Fraser C.M."/>
            <person name="Lillehaug J.R."/>
            <person name="Eisen J.A."/>
        </authorList>
    </citation>
    <scope>NUCLEOTIDE SEQUENCE [LARGE SCALE GENOMIC DNA]</scope>
    <source>
        <strain>ATCC 33009 / NCIMB 11132 / Bath</strain>
    </source>
</reference>
<organism>
    <name type="scientific">Methylococcus capsulatus (strain ATCC 33009 / NCIMB 11132 / Bath)</name>
    <dbReference type="NCBI Taxonomy" id="243233"/>
    <lineage>
        <taxon>Bacteria</taxon>
        <taxon>Pseudomonadati</taxon>
        <taxon>Pseudomonadota</taxon>
        <taxon>Gammaproteobacteria</taxon>
        <taxon>Methylococcales</taxon>
        <taxon>Methylococcaceae</taxon>
        <taxon>Methylococcus</taxon>
    </lineage>
</organism>